<keyword id="KW-0030">Aminoacyl-tRNA synthetase</keyword>
<keyword id="KW-0067">ATP-binding</keyword>
<keyword id="KW-0963">Cytoplasm</keyword>
<keyword id="KW-0436">Ligase</keyword>
<keyword id="KW-0547">Nucleotide-binding</keyword>
<keyword id="KW-0648">Protein biosynthesis</keyword>
<keyword id="KW-1185">Reference proteome</keyword>
<gene>
    <name evidence="1" type="primary">glyS</name>
    <name type="ordered locus">DVU_1897</name>
</gene>
<comment type="catalytic activity">
    <reaction evidence="1">
        <text>tRNA(Gly) + glycine + ATP = glycyl-tRNA(Gly) + AMP + diphosphate</text>
        <dbReference type="Rhea" id="RHEA:16013"/>
        <dbReference type="Rhea" id="RHEA-COMP:9664"/>
        <dbReference type="Rhea" id="RHEA-COMP:9683"/>
        <dbReference type="ChEBI" id="CHEBI:30616"/>
        <dbReference type="ChEBI" id="CHEBI:33019"/>
        <dbReference type="ChEBI" id="CHEBI:57305"/>
        <dbReference type="ChEBI" id="CHEBI:78442"/>
        <dbReference type="ChEBI" id="CHEBI:78522"/>
        <dbReference type="ChEBI" id="CHEBI:456215"/>
        <dbReference type="EC" id="6.1.1.14"/>
    </reaction>
</comment>
<comment type="subunit">
    <text evidence="1">Tetramer of two alpha and two beta subunits.</text>
</comment>
<comment type="subcellular location">
    <subcellularLocation>
        <location evidence="1">Cytoplasm</location>
    </subcellularLocation>
</comment>
<comment type="similarity">
    <text evidence="1">Belongs to the class-II aminoacyl-tRNA synthetase family.</text>
</comment>
<accession>Q72AU3</accession>
<dbReference type="EC" id="6.1.1.14" evidence="1"/>
<dbReference type="EMBL" id="AE017285">
    <property type="protein sequence ID" value="AAS96373.1"/>
    <property type="molecule type" value="Genomic_DNA"/>
</dbReference>
<dbReference type="RefSeq" id="WP_010939183.1">
    <property type="nucleotide sequence ID" value="NC_002937.3"/>
</dbReference>
<dbReference type="RefSeq" id="YP_011114.1">
    <property type="nucleotide sequence ID" value="NC_002937.3"/>
</dbReference>
<dbReference type="SMR" id="Q72AU3"/>
<dbReference type="IntAct" id="Q72AU3">
    <property type="interactions" value="1"/>
</dbReference>
<dbReference type="STRING" id="882.DVU_1897"/>
<dbReference type="PaxDb" id="882-DVU_1897"/>
<dbReference type="EnsemblBacteria" id="AAS96373">
    <property type="protein sequence ID" value="AAS96373"/>
    <property type="gene ID" value="DVU_1897"/>
</dbReference>
<dbReference type="KEGG" id="dvu:DVU_1897"/>
<dbReference type="PATRIC" id="fig|882.5.peg.1740"/>
<dbReference type="eggNOG" id="COG0751">
    <property type="taxonomic scope" value="Bacteria"/>
</dbReference>
<dbReference type="HOGENOM" id="CLU_007220_2_2_7"/>
<dbReference type="OrthoDB" id="9775440at2"/>
<dbReference type="PhylomeDB" id="Q72AU3"/>
<dbReference type="Proteomes" id="UP000002194">
    <property type="component" value="Chromosome"/>
</dbReference>
<dbReference type="GO" id="GO:0005829">
    <property type="term" value="C:cytosol"/>
    <property type="evidence" value="ECO:0007669"/>
    <property type="project" value="TreeGrafter"/>
</dbReference>
<dbReference type="GO" id="GO:0004814">
    <property type="term" value="F:arginine-tRNA ligase activity"/>
    <property type="evidence" value="ECO:0007669"/>
    <property type="project" value="InterPro"/>
</dbReference>
<dbReference type="GO" id="GO:0005524">
    <property type="term" value="F:ATP binding"/>
    <property type="evidence" value="ECO:0007669"/>
    <property type="project" value="UniProtKB-UniRule"/>
</dbReference>
<dbReference type="GO" id="GO:0004820">
    <property type="term" value="F:glycine-tRNA ligase activity"/>
    <property type="evidence" value="ECO:0007669"/>
    <property type="project" value="UniProtKB-UniRule"/>
</dbReference>
<dbReference type="GO" id="GO:0006420">
    <property type="term" value="P:arginyl-tRNA aminoacylation"/>
    <property type="evidence" value="ECO:0007669"/>
    <property type="project" value="InterPro"/>
</dbReference>
<dbReference type="GO" id="GO:0006426">
    <property type="term" value="P:glycyl-tRNA aminoacylation"/>
    <property type="evidence" value="ECO:0007669"/>
    <property type="project" value="UniProtKB-UniRule"/>
</dbReference>
<dbReference type="HAMAP" id="MF_00255">
    <property type="entry name" value="Gly_tRNA_synth_beta"/>
    <property type="match status" value="1"/>
</dbReference>
<dbReference type="InterPro" id="IPR008909">
    <property type="entry name" value="DALR_anticod-bd"/>
</dbReference>
<dbReference type="InterPro" id="IPR015944">
    <property type="entry name" value="Gly-tRNA-synth_bsu"/>
</dbReference>
<dbReference type="InterPro" id="IPR006194">
    <property type="entry name" value="Gly-tRNA-synth_heterodimer"/>
</dbReference>
<dbReference type="NCBIfam" id="TIGR00211">
    <property type="entry name" value="glyS"/>
    <property type="match status" value="1"/>
</dbReference>
<dbReference type="PANTHER" id="PTHR30075:SF2">
    <property type="entry name" value="GLYCINE--TRNA LIGASE, CHLOROPLASTIC_MITOCHONDRIAL 2"/>
    <property type="match status" value="1"/>
</dbReference>
<dbReference type="PANTHER" id="PTHR30075">
    <property type="entry name" value="GLYCYL-TRNA SYNTHETASE"/>
    <property type="match status" value="1"/>
</dbReference>
<dbReference type="Pfam" id="PF05746">
    <property type="entry name" value="DALR_1"/>
    <property type="match status" value="1"/>
</dbReference>
<dbReference type="Pfam" id="PF02092">
    <property type="entry name" value="tRNA_synt_2f"/>
    <property type="match status" value="1"/>
</dbReference>
<dbReference type="PRINTS" id="PR01045">
    <property type="entry name" value="TRNASYNTHGB"/>
</dbReference>
<dbReference type="SUPFAM" id="SSF109604">
    <property type="entry name" value="HD-domain/PDEase-like"/>
    <property type="match status" value="1"/>
</dbReference>
<dbReference type="PROSITE" id="PS50861">
    <property type="entry name" value="AA_TRNA_LIGASE_II_GLYAB"/>
    <property type="match status" value="1"/>
</dbReference>
<evidence type="ECO:0000255" key="1">
    <source>
        <dbReference type="HAMAP-Rule" id="MF_00255"/>
    </source>
</evidence>
<reference key="1">
    <citation type="journal article" date="2004" name="Nat. Biotechnol.">
        <title>The genome sequence of the anaerobic, sulfate-reducing bacterium Desulfovibrio vulgaris Hildenborough.</title>
        <authorList>
            <person name="Heidelberg J.F."/>
            <person name="Seshadri R."/>
            <person name="Haveman S.A."/>
            <person name="Hemme C.L."/>
            <person name="Paulsen I.T."/>
            <person name="Kolonay J.F."/>
            <person name="Eisen J.A."/>
            <person name="Ward N.L."/>
            <person name="Methe B.A."/>
            <person name="Brinkac L.M."/>
            <person name="Daugherty S.C."/>
            <person name="DeBoy R.T."/>
            <person name="Dodson R.J."/>
            <person name="Durkin A.S."/>
            <person name="Madupu R."/>
            <person name="Nelson W.C."/>
            <person name="Sullivan S.A."/>
            <person name="Fouts D.E."/>
            <person name="Haft D.H."/>
            <person name="Selengut J."/>
            <person name="Peterson J.D."/>
            <person name="Davidsen T.M."/>
            <person name="Zafar N."/>
            <person name="Zhou L."/>
            <person name="Radune D."/>
            <person name="Dimitrov G."/>
            <person name="Hance M."/>
            <person name="Tran K."/>
            <person name="Khouri H.M."/>
            <person name="Gill J."/>
            <person name="Utterback T.R."/>
            <person name="Feldblyum T.V."/>
            <person name="Wall J.D."/>
            <person name="Voordouw G."/>
            <person name="Fraser C.M."/>
        </authorList>
    </citation>
    <scope>NUCLEOTIDE SEQUENCE [LARGE SCALE GENOMIC DNA]</scope>
    <source>
        <strain>ATCC 29579 / DSM 644 / CCUG 34227 / NCIMB 8303 / VKM B-1760 / Hildenborough</strain>
    </source>
</reference>
<sequence length="696" mass="75402">MSQFVLEIGTEELPARFLPALERELAERFTRALADAGIECDPVRVMSTPRRAVVRMDAVNPVQSESEEVVTGPPARIAFTPEGGLTKAAEGFARTQGVEVADIFRLTTDKGEYIAVRKHMGGARSIDLLRDICPAIIGALPFPKRMRWGSGDFTYARPMRWLLALFDESVVDFEVGGVRSGNITYGHRIHGAGPLTVARAGDYERVIREQGGVTPVGEERRNAVVKGGNALAVAAGGKVIWKDSLLDEVQGLVEHPVPCLGNIDPSFLELPREVLLTSMESHQKSFGVEDAEGRLMPHFLTVLNLTPLDGDLVRKGWERVLRARLEDARFFWKTDLASSFDAWLASLDNVIFLGPLGSMGDKTRRLEQLCAWLAAEVGFDDATAAARAGRLSKGDLVSGMVGEFDTLQGIMGGIYARRMGEAEAVAAAIAEQYLPAGPDSPVPSSMCGALLSIADKADTLAGCFGLGMIPTGAADPYALRRCVLGIARIILEHGLQLDVRGLFAKAFALYGERAWKLAPEDALVKLDEFFMARLRNLFIANGYETLLVEAVLAAGCDDVRSAGARLEALAAFSRRDDFASAVLTFKRAANIIRKQGGDSDVALDGAWKADLLVEDAERQLAASLEAMFPRFDGLWAEGDYPALFGLLGELRPVVDGFFEGVMVMSDDAALRTNRLNLLQALVGRLSRLADFGALQM</sequence>
<feature type="chain" id="PRO_1000197179" description="Glycine--tRNA ligase beta subunit">
    <location>
        <begin position="1"/>
        <end position="696"/>
    </location>
</feature>
<name>SYGB_NITV2</name>
<proteinExistence type="inferred from homology"/>
<protein>
    <recommendedName>
        <fullName evidence="1">Glycine--tRNA ligase beta subunit</fullName>
        <ecNumber evidence="1">6.1.1.14</ecNumber>
    </recommendedName>
    <alternativeName>
        <fullName evidence="1">Glycyl-tRNA synthetase beta subunit</fullName>
        <shortName evidence="1">GlyRS</shortName>
    </alternativeName>
</protein>
<organism>
    <name type="scientific">Nitratidesulfovibrio vulgaris (strain ATCC 29579 / DSM 644 / CCUG 34227 / NCIMB 8303 / VKM B-1760 / Hildenborough)</name>
    <name type="common">Desulfovibrio vulgaris</name>
    <dbReference type="NCBI Taxonomy" id="882"/>
    <lineage>
        <taxon>Bacteria</taxon>
        <taxon>Pseudomonadati</taxon>
        <taxon>Thermodesulfobacteriota</taxon>
        <taxon>Desulfovibrionia</taxon>
        <taxon>Desulfovibrionales</taxon>
        <taxon>Desulfovibrionaceae</taxon>
        <taxon>Nitratidesulfovibrio</taxon>
    </lineage>
</organism>